<comment type="function">
    <text evidence="1">Component of the chromosomal passenger complex (CPC), a complex that acts as a key regulator of mitosis. The CPC complex has essential functions at the centromere in ensuring correct chromosome alignment and segregation and is required for chromatin-induced microtubule stabilization and spindle assembly (By similarity).</text>
</comment>
<comment type="subunit">
    <text evidence="1">Component of the CPC complex.</text>
</comment>
<comment type="subcellular location">
    <subcellularLocation>
        <location evidence="1">Nucleus</location>
    </subcellularLocation>
    <subcellularLocation>
        <location evidence="1">Chromosome</location>
        <location evidence="1">Centromere</location>
    </subcellularLocation>
    <text evidence="1">Localizes on chromosome arms and inner centromeres from prophase through metaphase and then transferring to the spindle midzone and midbody from anaphase through cytokinesis.</text>
</comment>
<comment type="similarity">
    <text evidence="2">Belongs to the borealin family.</text>
</comment>
<name>BORE2_DANRE</name>
<sequence>MAPRRTRKVSQDSDGQADDQHSFEQKIRLTKRKELFIQQFEKEAQDRINEMEANLNKLLATVDRVFKIELMKMPLSLHTTLIKDLMNDDDTSVGEVTMALKCASPEIQKPLSRKPSKKALNALAGQQRSSSQSKTPIEGQKKPTKKTLHSSKSTGSLRCASTINAKRTQGRVVKLSDQANALGVQFRQTSRSVGDELMMATATIVTSHGETLFLSEDNKDEINVELLDDAAVNQMRKIKELMDYLCNKVRINNTC</sequence>
<feature type="chain" id="PRO_0000397223" description="Borealin-2">
    <location>
        <begin position="1"/>
        <end position="255"/>
    </location>
</feature>
<feature type="region of interest" description="Disordered" evidence="3">
    <location>
        <begin position="1"/>
        <end position="24"/>
    </location>
</feature>
<feature type="region of interest" description="Disordered" evidence="3">
    <location>
        <begin position="107"/>
        <end position="156"/>
    </location>
</feature>
<feature type="compositionally biased region" description="Polar residues" evidence="3">
    <location>
        <begin position="124"/>
        <end position="135"/>
    </location>
</feature>
<organism>
    <name type="scientific">Danio rerio</name>
    <name type="common">Zebrafish</name>
    <name type="synonym">Brachydanio rerio</name>
    <dbReference type="NCBI Taxonomy" id="7955"/>
    <lineage>
        <taxon>Eukaryota</taxon>
        <taxon>Metazoa</taxon>
        <taxon>Chordata</taxon>
        <taxon>Craniata</taxon>
        <taxon>Vertebrata</taxon>
        <taxon>Euteleostomi</taxon>
        <taxon>Actinopterygii</taxon>
        <taxon>Neopterygii</taxon>
        <taxon>Teleostei</taxon>
        <taxon>Ostariophysi</taxon>
        <taxon>Cypriniformes</taxon>
        <taxon>Danionidae</taxon>
        <taxon>Danioninae</taxon>
        <taxon>Danio</taxon>
    </lineage>
</organism>
<gene>
    <name type="primary">cdca9</name>
    <name type="synonym">cdca8.2</name>
</gene>
<accession>P86347</accession>
<dbReference type="EMBL" id="BM036885">
    <property type="status" value="NOT_ANNOTATED_CDS"/>
    <property type="molecule type" value="mRNA"/>
</dbReference>
<dbReference type="EMBL" id="BM777478">
    <property type="status" value="NOT_ANNOTATED_CDS"/>
    <property type="molecule type" value="mRNA"/>
</dbReference>
<dbReference type="SMR" id="P86347"/>
<dbReference type="STRING" id="7955.ENSDARP00000127103"/>
<dbReference type="PaxDb" id="7955-ENSDARP00000127103"/>
<dbReference type="eggNOG" id="ENOG502S23P">
    <property type="taxonomic scope" value="Eukaryota"/>
</dbReference>
<dbReference type="InParanoid" id="P86347"/>
<dbReference type="PhylomeDB" id="P86347"/>
<dbReference type="Proteomes" id="UP000000437">
    <property type="component" value="Unplaced"/>
</dbReference>
<dbReference type="GO" id="GO:0000775">
    <property type="term" value="C:chromosome, centromeric region"/>
    <property type="evidence" value="ECO:0007669"/>
    <property type="project" value="UniProtKB-SubCell"/>
</dbReference>
<dbReference type="GO" id="GO:0005634">
    <property type="term" value="C:nucleus"/>
    <property type="evidence" value="ECO:0007669"/>
    <property type="project" value="UniProtKB-SubCell"/>
</dbReference>
<dbReference type="GO" id="GO:0051301">
    <property type="term" value="P:cell division"/>
    <property type="evidence" value="ECO:0007669"/>
    <property type="project" value="UniProtKB-KW"/>
</dbReference>
<dbReference type="Gene3D" id="6.10.250.1900">
    <property type="match status" value="1"/>
</dbReference>
<dbReference type="InterPro" id="IPR018851">
    <property type="entry name" value="Borealin_N"/>
</dbReference>
<dbReference type="InterPro" id="IPR018867">
    <property type="entry name" value="Cell_div_borealin"/>
</dbReference>
<dbReference type="PANTHER" id="PTHR16040">
    <property type="entry name" value="AUSTRALIN, ISOFORM A-RELATED"/>
    <property type="match status" value="1"/>
</dbReference>
<dbReference type="PANTHER" id="PTHR16040:SF10">
    <property type="entry name" value="BOREALIN-2"/>
    <property type="match status" value="1"/>
</dbReference>
<dbReference type="Pfam" id="PF10444">
    <property type="entry name" value="Nbl1_Borealin_N"/>
    <property type="match status" value="1"/>
</dbReference>
<protein>
    <recommendedName>
        <fullName evidence="1">Borealin-2</fullName>
    </recommendedName>
    <alternativeName>
        <fullName>Cell division cycle-associated protein 8.2</fullName>
    </alternativeName>
    <alternativeName>
        <fullName>Cell division cycle-associated protein 9</fullName>
    </alternativeName>
    <alternativeName>
        <fullName evidence="5">Dasra-A</fullName>
        <shortName evidence="5">DrDasraA</shortName>
    </alternativeName>
</protein>
<keyword id="KW-0131">Cell cycle</keyword>
<keyword id="KW-0132">Cell division</keyword>
<keyword id="KW-0137">Centromere</keyword>
<keyword id="KW-0158">Chromosome</keyword>
<keyword id="KW-0498">Mitosis</keyword>
<keyword id="KW-0539">Nucleus</keyword>
<keyword id="KW-1185">Reference proteome</keyword>
<evidence type="ECO:0000250" key="1">
    <source>
        <dbReference type="UniProtKB" id="Q4V7H8"/>
    </source>
</evidence>
<evidence type="ECO:0000255" key="2"/>
<evidence type="ECO:0000256" key="3">
    <source>
        <dbReference type="SAM" id="MobiDB-lite"/>
    </source>
</evidence>
<evidence type="ECO:0000269" key="4">
    <source ref="1"/>
</evidence>
<evidence type="ECO:0000303" key="5">
    <source>
    </source>
</evidence>
<evidence type="ECO:0000305" key="6"/>
<proteinExistence type="evidence at transcript level"/>
<reference evidence="6" key="1">
    <citation type="submission" date="2000-11" db="EMBL/GenBank/DDBJ databases">
        <title>WashU Zebrafish EST Project 1998.</title>
        <authorList>
            <person name="Clark M."/>
            <person name="Johnson S.L."/>
            <person name="Lehrach H."/>
            <person name="Lee R."/>
            <person name="Li F."/>
            <person name="Marra M."/>
            <person name="Eddy S."/>
            <person name="Hillier L."/>
            <person name="Kucaba T."/>
            <person name="Martin J."/>
            <person name="Beck C."/>
            <person name="Wylie T."/>
            <person name="Underwood K."/>
            <person name="Steptoe M."/>
            <person name="Theising B."/>
            <person name="Allen M."/>
            <person name="Bowers Y."/>
            <person name="Person B."/>
            <person name="Swaller T."/>
            <person name="Gibbons M."/>
            <person name="Pape D."/>
            <person name="Harvey N."/>
            <person name="Schurk R."/>
            <person name="Ritter E."/>
            <person name="Kohn S."/>
            <person name="Shin T."/>
            <person name="Jackson Y."/>
            <person name="Cardenas M."/>
            <person name="McCann R."/>
            <person name="Waterston R."/>
            <person name="Wilson R."/>
        </authorList>
    </citation>
    <scope>NUCLEOTIDE SEQUENCE [LARGE SCALE MRNA]</scope>
    <source>
        <tissue evidence="4">Ovary</tissue>
    </source>
</reference>
<reference evidence="6" key="2">
    <citation type="journal article" date="2004" name="Cell">
        <title>The chromosomal passenger complex is required for chromatin-induced microtubule stabilization and spindle assembly.</title>
        <authorList>
            <person name="Sampath S.C."/>
            <person name="Ohi R."/>
            <person name="Leismann O."/>
            <person name="Salic A."/>
            <person name="Pozniakovski A."/>
            <person name="Funabiki H."/>
        </authorList>
    </citation>
    <scope>IDENTIFICATION</scope>
</reference>